<gene>
    <name evidence="1" type="primary">rpsK</name>
    <name type="ordered locus">VV1_0738</name>
</gene>
<dbReference type="EMBL" id="AE016795">
    <property type="protein sequence ID" value="AAO09247.1"/>
    <property type="molecule type" value="Genomic_DNA"/>
</dbReference>
<dbReference type="RefSeq" id="WP_001118870.1">
    <property type="nucleotide sequence ID" value="NC_004459.3"/>
</dbReference>
<dbReference type="SMR" id="P66369"/>
<dbReference type="GeneID" id="97171204"/>
<dbReference type="KEGG" id="vvu:VV1_0738"/>
<dbReference type="HOGENOM" id="CLU_072439_5_0_6"/>
<dbReference type="Proteomes" id="UP000002275">
    <property type="component" value="Chromosome 1"/>
</dbReference>
<dbReference type="GO" id="GO:1990904">
    <property type="term" value="C:ribonucleoprotein complex"/>
    <property type="evidence" value="ECO:0007669"/>
    <property type="project" value="UniProtKB-KW"/>
</dbReference>
<dbReference type="GO" id="GO:0005840">
    <property type="term" value="C:ribosome"/>
    <property type="evidence" value="ECO:0007669"/>
    <property type="project" value="UniProtKB-KW"/>
</dbReference>
<dbReference type="GO" id="GO:0019843">
    <property type="term" value="F:rRNA binding"/>
    <property type="evidence" value="ECO:0007669"/>
    <property type="project" value="UniProtKB-UniRule"/>
</dbReference>
<dbReference type="GO" id="GO:0003735">
    <property type="term" value="F:structural constituent of ribosome"/>
    <property type="evidence" value="ECO:0007669"/>
    <property type="project" value="InterPro"/>
</dbReference>
<dbReference type="GO" id="GO:0006412">
    <property type="term" value="P:translation"/>
    <property type="evidence" value="ECO:0007669"/>
    <property type="project" value="UniProtKB-UniRule"/>
</dbReference>
<dbReference type="FunFam" id="3.30.420.80:FF:000001">
    <property type="entry name" value="30S ribosomal protein S11"/>
    <property type="match status" value="1"/>
</dbReference>
<dbReference type="Gene3D" id="3.30.420.80">
    <property type="entry name" value="Ribosomal protein S11"/>
    <property type="match status" value="1"/>
</dbReference>
<dbReference type="HAMAP" id="MF_01310">
    <property type="entry name" value="Ribosomal_uS11"/>
    <property type="match status" value="1"/>
</dbReference>
<dbReference type="InterPro" id="IPR001971">
    <property type="entry name" value="Ribosomal_uS11"/>
</dbReference>
<dbReference type="InterPro" id="IPR019981">
    <property type="entry name" value="Ribosomal_uS11_bac-type"/>
</dbReference>
<dbReference type="InterPro" id="IPR018102">
    <property type="entry name" value="Ribosomal_uS11_CS"/>
</dbReference>
<dbReference type="InterPro" id="IPR036967">
    <property type="entry name" value="Ribosomal_uS11_sf"/>
</dbReference>
<dbReference type="NCBIfam" id="NF003698">
    <property type="entry name" value="PRK05309.1"/>
    <property type="match status" value="1"/>
</dbReference>
<dbReference type="NCBIfam" id="TIGR03632">
    <property type="entry name" value="uS11_bact"/>
    <property type="match status" value="1"/>
</dbReference>
<dbReference type="PANTHER" id="PTHR11759">
    <property type="entry name" value="40S RIBOSOMAL PROTEIN S14/30S RIBOSOMAL PROTEIN S11"/>
    <property type="match status" value="1"/>
</dbReference>
<dbReference type="Pfam" id="PF00411">
    <property type="entry name" value="Ribosomal_S11"/>
    <property type="match status" value="1"/>
</dbReference>
<dbReference type="PIRSF" id="PIRSF002131">
    <property type="entry name" value="Ribosomal_S11"/>
    <property type="match status" value="1"/>
</dbReference>
<dbReference type="SUPFAM" id="SSF53137">
    <property type="entry name" value="Translational machinery components"/>
    <property type="match status" value="1"/>
</dbReference>
<dbReference type="PROSITE" id="PS00054">
    <property type="entry name" value="RIBOSOMAL_S11"/>
    <property type="match status" value="1"/>
</dbReference>
<proteinExistence type="inferred from homology"/>
<name>RS11_VIBVU</name>
<comment type="function">
    <text evidence="1">Located on the platform of the 30S subunit, it bridges several disparate RNA helices of the 16S rRNA. Forms part of the Shine-Dalgarno cleft in the 70S ribosome.</text>
</comment>
<comment type="subunit">
    <text evidence="1">Part of the 30S ribosomal subunit. Interacts with proteins S7 and S18. Binds to IF-3.</text>
</comment>
<comment type="similarity">
    <text evidence="1">Belongs to the universal ribosomal protein uS11 family.</text>
</comment>
<accession>P66369</accession>
<accession>Q9KP06</accession>
<sequence>MAKQPTRARKRVRKQVADGVAHIHASFNNTIVTITDRQGNALAWATAGGSGFRGSRKSTPFAAQVAAERCAEMAKEYGLKNLEVMVKGPGPGRESTVRALNAAGFRITNIVDATPIPHNGCRPPKKRRV</sequence>
<keyword id="KW-0687">Ribonucleoprotein</keyword>
<keyword id="KW-0689">Ribosomal protein</keyword>
<keyword id="KW-0694">RNA-binding</keyword>
<keyword id="KW-0699">rRNA-binding</keyword>
<evidence type="ECO:0000255" key="1">
    <source>
        <dbReference type="HAMAP-Rule" id="MF_01310"/>
    </source>
</evidence>
<evidence type="ECO:0000305" key="2"/>
<organism>
    <name type="scientific">Vibrio vulnificus (strain CMCP6)</name>
    <dbReference type="NCBI Taxonomy" id="216895"/>
    <lineage>
        <taxon>Bacteria</taxon>
        <taxon>Pseudomonadati</taxon>
        <taxon>Pseudomonadota</taxon>
        <taxon>Gammaproteobacteria</taxon>
        <taxon>Vibrionales</taxon>
        <taxon>Vibrionaceae</taxon>
        <taxon>Vibrio</taxon>
    </lineage>
</organism>
<feature type="chain" id="PRO_0000123255" description="Small ribosomal subunit protein uS11">
    <location>
        <begin position="1"/>
        <end position="129"/>
    </location>
</feature>
<reference key="1">
    <citation type="submission" date="2002-12" db="EMBL/GenBank/DDBJ databases">
        <title>Complete genome sequence of Vibrio vulnificus CMCP6.</title>
        <authorList>
            <person name="Rhee J.H."/>
            <person name="Kim S.Y."/>
            <person name="Chung S.S."/>
            <person name="Kim J.J."/>
            <person name="Moon Y.H."/>
            <person name="Jeong H."/>
            <person name="Choy H.E."/>
        </authorList>
    </citation>
    <scope>NUCLEOTIDE SEQUENCE [LARGE SCALE GENOMIC DNA]</scope>
    <source>
        <strain>CMCP6</strain>
    </source>
</reference>
<protein>
    <recommendedName>
        <fullName evidence="1">Small ribosomal subunit protein uS11</fullName>
    </recommendedName>
    <alternativeName>
        <fullName evidence="2">30S ribosomal protein S11</fullName>
    </alternativeName>
</protein>